<sequence length="369" mass="39574">MKSGRFIGVMSGTSLDGVDVVLATIDEHRVAQLASLSWPIPVSLKQAVLDICQGQQLTLSQFGQLDTQLGRLFADAVNALLKEQNLQARDIVAIGCHGQTVWHEPTGVAPHTLQIGDNNQIVARTGITVVGDFRRRDIALGGQGAPLVPAFHHALLAHPTERRMVLNIGGIANLSLLIPGQLVGGYDTGPGNMLMDAWIWRQAGKPYDKDAEWARAGKVILPLLQNMLSDPYFSQPAPKSTGREYFNYGWLERHLRHFPGVDPRDVQATLAELTAVTISEQVLLSGGCERLMVCGGGSRNPLLMARLAVLLLGTEVTTTDAVGISGDDMEALAFAWLAWRTLAGLPGNLPSVTGASQETVLGAIFPANS</sequence>
<keyword id="KW-0067">ATP-binding</keyword>
<keyword id="KW-0119">Carbohydrate metabolism</keyword>
<keyword id="KW-0418">Kinase</keyword>
<keyword id="KW-0547">Nucleotide-binding</keyword>
<keyword id="KW-1185">Reference proteome</keyword>
<keyword id="KW-0808">Transferase</keyword>
<proteinExistence type="inferred from homology"/>
<evidence type="ECO:0000255" key="1">
    <source>
        <dbReference type="HAMAP-Rule" id="MF_01270"/>
    </source>
</evidence>
<comment type="function">
    <text evidence="1">Catalyzes the specific phosphorylation of 1,6-anhydro-N-acetylmuramic acid (anhMurNAc) with the simultaneous cleavage of the 1,6-anhydro ring, generating MurNAc-6-P. Is required for the utilization of anhMurNAc either imported from the medium or derived from its own cell wall murein, and thus plays a role in cell wall recycling.</text>
</comment>
<comment type="catalytic activity">
    <reaction evidence="1">
        <text>1,6-anhydro-N-acetyl-beta-muramate + ATP + H2O = N-acetyl-D-muramate 6-phosphate + ADP + H(+)</text>
        <dbReference type="Rhea" id="RHEA:24952"/>
        <dbReference type="ChEBI" id="CHEBI:15377"/>
        <dbReference type="ChEBI" id="CHEBI:15378"/>
        <dbReference type="ChEBI" id="CHEBI:30616"/>
        <dbReference type="ChEBI" id="CHEBI:58690"/>
        <dbReference type="ChEBI" id="CHEBI:58722"/>
        <dbReference type="ChEBI" id="CHEBI:456216"/>
        <dbReference type="EC" id="2.7.1.170"/>
    </reaction>
</comment>
<comment type="pathway">
    <text evidence="1">Amino-sugar metabolism; 1,6-anhydro-N-acetylmuramate degradation.</text>
</comment>
<comment type="pathway">
    <text evidence="1">Cell wall biogenesis; peptidoglycan recycling.</text>
</comment>
<comment type="similarity">
    <text evidence="1">Belongs to the anhydro-N-acetylmuramic acid kinase family.</text>
</comment>
<feature type="chain" id="PRO_0000250060" description="Anhydro-N-acetylmuramic acid kinase">
    <location>
        <begin position="1"/>
        <end position="369"/>
    </location>
</feature>
<feature type="binding site" evidence="1">
    <location>
        <begin position="12"/>
        <end position="19"/>
    </location>
    <ligand>
        <name>ATP</name>
        <dbReference type="ChEBI" id="CHEBI:30616"/>
    </ligand>
</feature>
<name>ANMK_SHIFL</name>
<reference key="1">
    <citation type="journal article" date="2002" name="Nucleic Acids Res.">
        <title>Genome sequence of Shigella flexneri 2a: insights into pathogenicity through comparison with genomes of Escherichia coli K12 and O157.</title>
        <authorList>
            <person name="Jin Q."/>
            <person name="Yuan Z."/>
            <person name="Xu J."/>
            <person name="Wang Y."/>
            <person name="Shen Y."/>
            <person name="Lu W."/>
            <person name="Wang J."/>
            <person name="Liu H."/>
            <person name="Yang J."/>
            <person name="Yang F."/>
            <person name="Zhang X."/>
            <person name="Zhang J."/>
            <person name="Yang G."/>
            <person name="Wu H."/>
            <person name="Qu D."/>
            <person name="Dong J."/>
            <person name="Sun L."/>
            <person name="Xue Y."/>
            <person name="Zhao A."/>
            <person name="Gao Y."/>
            <person name="Zhu J."/>
            <person name="Kan B."/>
            <person name="Ding K."/>
            <person name="Chen S."/>
            <person name="Cheng H."/>
            <person name="Yao Z."/>
            <person name="He B."/>
            <person name="Chen R."/>
            <person name="Ma D."/>
            <person name="Qiang B."/>
            <person name="Wen Y."/>
            <person name="Hou Y."/>
            <person name="Yu J."/>
        </authorList>
    </citation>
    <scope>NUCLEOTIDE SEQUENCE [LARGE SCALE GENOMIC DNA]</scope>
    <source>
        <strain>301 / Serotype 2a</strain>
    </source>
</reference>
<reference key="2">
    <citation type="journal article" date="2003" name="Infect. Immun.">
        <title>Complete genome sequence and comparative genomics of Shigella flexneri serotype 2a strain 2457T.</title>
        <authorList>
            <person name="Wei J."/>
            <person name="Goldberg M.B."/>
            <person name="Burland V."/>
            <person name="Venkatesan M.M."/>
            <person name="Deng W."/>
            <person name="Fournier G."/>
            <person name="Mayhew G.F."/>
            <person name="Plunkett G. III"/>
            <person name="Rose D.J."/>
            <person name="Darling A."/>
            <person name="Mau B."/>
            <person name="Perna N.T."/>
            <person name="Payne S.M."/>
            <person name="Runyen-Janecky L.J."/>
            <person name="Zhou S."/>
            <person name="Schwartz D.C."/>
            <person name="Blattner F.R."/>
        </authorList>
    </citation>
    <scope>NUCLEOTIDE SEQUENCE [LARGE SCALE GENOMIC DNA]</scope>
    <source>
        <strain>ATCC 700930 / 2457T / Serotype 2a</strain>
    </source>
</reference>
<dbReference type="EC" id="2.7.1.170" evidence="1"/>
<dbReference type="EMBL" id="AE005674">
    <property type="protein sequence ID" value="AAN43249.1"/>
    <property type="molecule type" value="Genomic_DNA"/>
</dbReference>
<dbReference type="EMBL" id="AE014073">
    <property type="protein sequence ID" value="AAP17135.1"/>
    <property type="molecule type" value="Genomic_DNA"/>
</dbReference>
<dbReference type="RefSeq" id="NP_707542.1">
    <property type="nucleotide sequence ID" value="NC_004337.2"/>
</dbReference>
<dbReference type="RefSeq" id="WP_000835055.1">
    <property type="nucleotide sequence ID" value="NZ_WPGW01000025.1"/>
</dbReference>
<dbReference type="SMR" id="Q83KX8"/>
<dbReference type="STRING" id="198214.SF1667"/>
<dbReference type="PaxDb" id="198214-SF1667"/>
<dbReference type="GeneID" id="1024861"/>
<dbReference type="KEGG" id="sfl:SF1667"/>
<dbReference type="KEGG" id="sfx:S1799"/>
<dbReference type="PATRIC" id="fig|198214.7.peg.1964"/>
<dbReference type="HOGENOM" id="CLU_038782_0_0_6"/>
<dbReference type="UniPathway" id="UPA00343"/>
<dbReference type="UniPathway" id="UPA00544"/>
<dbReference type="Proteomes" id="UP000001006">
    <property type="component" value="Chromosome"/>
</dbReference>
<dbReference type="Proteomes" id="UP000002673">
    <property type="component" value="Chromosome"/>
</dbReference>
<dbReference type="GO" id="GO:0005524">
    <property type="term" value="F:ATP binding"/>
    <property type="evidence" value="ECO:0007669"/>
    <property type="project" value="UniProtKB-UniRule"/>
</dbReference>
<dbReference type="GO" id="GO:0016301">
    <property type="term" value="F:kinase activity"/>
    <property type="evidence" value="ECO:0007669"/>
    <property type="project" value="UniProtKB-KW"/>
</dbReference>
<dbReference type="GO" id="GO:0016773">
    <property type="term" value="F:phosphotransferase activity, alcohol group as acceptor"/>
    <property type="evidence" value="ECO:0007669"/>
    <property type="project" value="UniProtKB-UniRule"/>
</dbReference>
<dbReference type="GO" id="GO:0097175">
    <property type="term" value="P:1,6-anhydro-N-acetyl-beta-muramic acid catabolic process"/>
    <property type="evidence" value="ECO:0007669"/>
    <property type="project" value="UniProtKB-UniRule"/>
</dbReference>
<dbReference type="GO" id="GO:0006040">
    <property type="term" value="P:amino sugar metabolic process"/>
    <property type="evidence" value="ECO:0007669"/>
    <property type="project" value="InterPro"/>
</dbReference>
<dbReference type="GO" id="GO:0009254">
    <property type="term" value="P:peptidoglycan turnover"/>
    <property type="evidence" value="ECO:0007669"/>
    <property type="project" value="UniProtKB-UniRule"/>
</dbReference>
<dbReference type="CDD" id="cd24050">
    <property type="entry name" value="ASKHA_NBD_ANMK"/>
    <property type="match status" value="1"/>
</dbReference>
<dbReference type="Gene3D" id="3.30.420.40">
    <property type="match status" value="2"/>
</dbReference>
<dbReference type="HAMAP" id="MF_01270">
    <property type="entry name" value="AnhMurNAc_kinase"/>
    <property type="match status" value="1"/>
</dbReference>
<dbReference type="InterPro" id="IPR005338">
    <property type="entry name" value="Anhydro_N_Ac-Mur_kinase"/>
</dbReference>
<dbReference type="InterPro" id="IPR043129">
    <property type="entry name" value="ATPase_NBD"/>
</dbReference>
<dbReference type="NCBIfam" id="NF007138">
    <property type="entry name" value="PRK09585.1-1"/>
    <property type="match status" value="1"/>
</dbReference>
<dbReference type="NCBIfam" id="NF007139">
    <property type="entry name" value="PRK09585.1-3"/>
    <property type="match status" value="1"/>
</dbReference>
<dbReference type="NCBIfam" id="NF007148">
    <property type="entry name" value="PRK09585.3-2"/>
    <property type="match status" value="1"/>
</dbReference>
<dbReference type="PANTHER" id="PTHR30605">
    <property type="entry name" value="ANHYDRO-N-ACETYLMURAMIC ACID KINASE"/>
    <property type="match status" value="1"/>
</dbReference>
<dbReference type="PANTHER" id="PTHR30605:SF0">
    <property type="entry name" value="ANHYDRO-N-ACETYLMURAMIC ACID KINASE"/>
    <property type="match status" value="1"/>
</dbReference>
<dbReference type="Pfam" id="PF03702">
    <property type="entry name" value="AnmK"/>
    <property type="match status" value="1"/>
</dbReference>
<dbReference type="SUPFAM" id="SSF53067">
    <property type="entry name" value="Actin-like ATPase domain"/>
    <property type="match status" value="1"/>
</dbReference>
<accession>Q83KX8</accession>
<accession>Q7C1F8</accession>
<gene>
    <name evidence="1" type="primary">anmK</name>
    <name type="ordered locus">SF1667</name>
    <name type="ordered locus">S1799</name>
</gene>
<protein>
    <recommendedName>
        <fullName evidence="1">Anhydro-N-acetylmuramic acid kinase</fullName>
        <ecNumber evidence="1">2.7.1.170</ecNumber>
    </recommendedName>
    <alternativeName>
        <fullName evidence="1">AnhMurNAc kinase</fullName>
    </alternativeName>
</protein>
<organism>
    <name type="scientific">Shigella flexneri</name>
    <dbReference type="NCBI Taxonomy" id="623"/>
    <lineage>
        <taxon>Bacteria</taxon>
        <taxon>Pseudomonadati</taxon>
        <taxon>Pseudomonadota</taxon>
        <taxon>Gammaproteobacteria</taxon>
        <taxon>Enterobacterales</taxon>
        <taxon>Enterobacteriaceae</taxon>
        <taxon>Shigella</taxon>
    </lineage>
</organism>